<feature type="chain" id="PRO_0000171639" description="Flavodoxin">
    <location>
        <begin position="1"/>
        <end position="137"/>
    </location>
</feature>
<feature type="domain" description="Flavodoxin-like" evidence="1">
    <location>
        <begin position="2"/>
        <end position="137"/>
    </location>
</feature>
<feature type="strand" evidence="3">
    <location>
        <begin position="2"/>
        <end position="6"/>
    </location>
</feature>
<feature type="strand" evidence="3">
    <location>
        <begin position="9"/>
        <end position="11"/>
    </location>
</feature>
<feature type="helix" evidence="3">
    <location>
        <begin position="12"/>
        <end position="26"/>
    </location>
</feature>
<feature type="strand" evidence="3">
    <location>
        <begin position="31"/>
        <end position="35"/>
    </location>
</feature>
<feature type="helix" evidence="3">
    <location>
        <begin position="41"/>
        <end position="45"/>
    </location>
</feature>
<feature type="strand" evidence="3">
    <location>
        <begin position="48"/>
        <end position="53"/>
    </location>
</feature>
<feature type="turn" evidence="3">
    <location>
        <begin position="58"/>
        <end position="60"/>
    </location>
</feature>
<feature type="helix" evidence="3">
    <location>
        <begin position="64"/>
        <end position="74"/>
    </location>
</feature>
<feature type="helix" evidence="3">
    <location>
        <begin position="75"/>
        <end position="77"/>
    </location>
</feature>
<feature type="strand" evidence="3">
    <location>
        <begin position="82"/>
        <end position="91"/>
    </location>
</feature>
<feature type="helix" evidence="3">
    <location>
        <begin position="95"/>
        <end position="106"/>
    </location>
</feature>
<feature type="strand" evidence="3">
    <location>
        <begin position="110"/>
        <end position="123"/>
    </location>
</feature>
<feature type="helix" evidence="3">
    <location>
        <begin position="126"/>
        <end position="135"/>
    </location>
</feature>
<name>FLAV_MEGEL</name>
<dbReference type="PIR" id="A92137">
    <property type="entry name" value="FXME"/>
</dbReference>
<dbReference type="RefSeq" id="WP_014015302.1">
    <property type="nucleotide sequence ID" value="NZ_JRPS01000009.1"/>
</dbReference>
<dbReference type="PDB" id="2FZ5">
    <property type="method" value="NMR"/>
    <property type="chains" value="A=1-137"/>
</dbReference>
<dbReference type="PDBsum" id="2FZ5"/>
<dbReference type="BMRB" id="P00321"/>
<dbReference type="SMR" id="P00321"/>
<dbReference type="GeneID" id="97491270"/>
<dbReference type="OrthoDB" id="9790745at2"/>
<dbReference type="EvolutionaryTrace" id="P00321"/>
<dbReference type="GO" id="GO:0009055">
    <property type="term" value="F:electron transfer activity"/>
    <property type="evidence" value="ECO:0007669"/>
    <property type="project" value="InterPro"/>
</dbReference>
<dbReference type="GO" id="GO:0010181">
    <property type="term" value="F:FMN binding"/>
    <property type="evidence" value="ECO:0007669"/>
    <property type="project" value="InterPro"/>
</dbReference>
<dbReference type="GO" id="GO:0016651">
    <property type="term" value="F:oxidoreductase activity, acting on NAD(P)H"/>
    <property type="evidence" value="ECO:0007669"/>
    <property type="project" value="UniProtKB-ARBA"/>
</dbReference>
<dbReference type="Gene3D" id="3.40.50.360">
    <property type="match status" value="1"/>
</dbReference>
<dbReference type="InterPro" id="IPR010087">
    <property type="entry name" value="Flav_short"/>
</dbReference>
<dbReference type="InterPro" id="IPR008254">
    <property type="entry name" value="Flavodoxin/NO_synth"/>
</dbReference>
<dbReference type="InterPro" id="IPR001226">
    <property type="entry name" value="Flavodoxin_CS"/>
</dbReference>
<dbReference type="InterPro" id="IPR029039">
    <property type="entry name" value="Flavoprotein-like_sf"/>
</dbReference>
<dbReference type="InterPro" id="IPR051285">
    <property type="entry name" value="NADH_oxidoreductase_modular"/>
</dbReference>
<dbReference type="NCBIfam" id="TIGR01753">
    <property type="entry name" value="flav_short"/>
    <property type="match status" value="1"/>
</dbReference>
<dbReference type="PANTHER" id="PTHR32145">
    <property type="entry name" value="DIFLAVIN FLAVOPROTEIN A 2-RELATED"/>
    <property type="match status" value="1"/>
</dbReference>
<dbReference type="PANTHER" id="PTHR32145:SF11">
    <property type="entry name" value="DIFLAVIN FLAVOPROTEIN A 2-RELATED"/>
    <property type="match status" value="1"/>
</dbReference>
<dbReference type="Pfam" id="PF00258">
    <property type="entry name" value="Flavodoxin_1"/>
    <property type="match status" value="1"/>
</dbReference>
<dbReference type="SUPFAM" id="SSF52218">
    <property type="entry name" value="Flavoproteins"/>
    <property type="match status" value="1"/>
</dbReference>
<dbReference type="PROSITE" id="PS00201">
    <property type="entry name" value="FLAVODOXIN"/>
    <property type="match status" value="1"/>
</dbReference>
<dbReference type="PROSITE" id="PS50902">
    <property type="entry name" value="FLAVODOXIN_LIKE"/>
    <property type="match status" value="1"/>
</dbReference>
<proteinExistence type="evidence at protein level"/>
<organism>
    <name type="scientific">Megasphaera elsdenii</name>
    <dbReference type="NCBI Taxonomy" id="907"/>
    <lineage>
        <taxon>Bacteria</taxon>
        <taxon>Bacillati</taxon>
        <taxon>Bacillota</taxon>
        <taxon>Negativicutes</taxon>
        <taxon>Veillonellales</taxon>
        <taxon>Veillonellaceae</taxon>
        <taxon>Megasphaera</taxon>
    </lineage>
</organism>
<evidence type="ECO:0000255" key="1">
    <source>
        <dbReference type="PROSITE-ProRule" id="PRU00088"/>
    </source>
</evidence>
<evidence type="ECO:0000305" key="2"/>
<evidence type="ECO:0007829" key="3">
    <source>
        <dbReference type="PDB" id="2FZ5"/>
    </source>
</evidence>
<reference key="1">
    <citation type="journal article" date="1973" name="J. Biol. Chem.">
        <title>The primary structure of Peptostreptococcus elsdenii flavodoxin.</title>
        <authorList>
            <person name="Tanaka M."/>
            <person name="Haniu M."/>
            <person name="Yasunobu K.T."/>
            <person name="Mayhew S.G."/>
            <person name="Massey V."/>
        </authorList>
    </citation>
    <scope>PROTEIN SEQUENCE</scope>
    <source>
        <strain>ATCC 25940 / DSM 20460 / JCM 1772 / NCIB 8927</strain>
    </source>
</reference>
<reference key="2">
    <citation type="journal article" date="1974" name="J. Biol. Chem.">
        <title>Correction of the amino acid sequence of Peptostreptococcus elsdenii flavodoxin.</title>
        <authorList>
            <person name="Tanaka M."/>
            <person name="Haniu M."/>
            <person name="Yasunobu K.T."/>
            <person name="Mayhew S.G."/>
            <person name="Massey V."/>
        </authorList>
    </citation>
    <scope>SEQUENCE REVISION TO 78-82</scope>
</reference>
<reference key="3">
    <citation type="journal article" date="1971" name="Biochemistry">
        <title>Amino- and carboxyl-terminal amino acid sequences of the Peptostreptococcus eisdenii and Clostridium pasteurianum flavodoxins.</title>
        <authorList>
            <person name="Tanaka M."/>
            <person name="Haniu M."/>
            <person name="Matsueda G."/>
            <person name="Yasunobu K.T."/>
            <person name="Mayhew S."/>
            <person name="Massey V."/>
        </authorList>
    </citation>
    <scope>PROTEIN SEQUENCE OF 1-41 AND 136-137</scope>
    <source>
        <strain>ATCC 25940 / DSM 20460 / JCM 1772 / NCIB 8927</strain>
    </source>
</reference>
<reference key="4">
    <citation type="journal article" date="1990" name="Eur. J. Biochem.">
        <title>Secondary and tertiary structure characteristics of Megasphaera elsdenii flavodoxin in the reduced state as determined by two-dimensional 1H NMR.</title>
        <authorList>
            <person name="van Mierlo C.P.M."/>
            <person name="Mueller F."/>
            <person name="Vervoort J."/>
        </authorList>
    </citation>
    <scope>STRUCTURE BY NMR</scope>
</reference>
<reference key="5">
    <citation type="journal article" date="1990" name="Eur. J. Biochem.">
        <title>Tertiary structure of two-electron reduced Megasphaera elsdenii flavodoxin and some implications, as determined by two-dimensional 1H-NMR and restrained molecular dynamics.</title>
        <authorList>
            <person name="van Mierlo C.P.M."/>
            <person name="Lijnzaad P."/>
            <person name="Vervoort J."/>
            <person name="Mueller F."/>
            <person name="Berendsen H.J.C."/>
            <person name="de Vlieg J."/>
        </authorList>
    </citation>
    <scope>STRUCTURE BY NMR</scope>
</reference>
<accession>P00321</accession>
<keyword id="KW-0002">3D-structure</keyword>
<keyword id="KW-0903">Direct protein sequencing</keyword>
<keyword id="KW-0249">Electron transport</keyword>
<keyword id="KW-0285">Flavoprotein</keyword>
<keyword id="KW-0288">FMN</keyword>
<keyword id="KW-0813">Transport</keyword>
<protein>
    <recommendedName>
        <fullName>Flavodoxin</fullName>
    </recommendedName>
</protein>
<sequence length="137" mass="14550">MVEIVYWSGTGNTEAMANEIEAAVKAAGADVESVRFEDTNVDDVASKDVILLGCPAMGSEELEDSVVEPFFTDLAPKLKGKKVGLFGSYGWGSGEWMDAWKQRTEDTGATVIGTAIVNEMPDNAPECKELGEAAAKA</sequence>
<comment type="function">
    <text>Low-potential electron donor to a number of redox enzymes.</text>
</comment>
<comment type="cofactor">
    <cofactor>
        <name>FMN</name>
        <dbReference type="ChEBI" id="CHEBI:58210"/>
    </cofactor>
</comment>
<comment type="similarity">
    <text evidence="2">Belongs to the flavodoxin family.</text>
</comment>